<comment type="subunit">
    <text evidence="1">Part of the 50S ribosomal subunit.</text>
</comment>
<comment type="similarity">
    <text evidence="1">Belongs to the bacterial ribosomal protein bL31 family. Type B subfamily.</text>
</comment>
<dbReference type="EMBL" id="CP000269">
    <property type="protein sequence ID" value="ABR91650.1"/>
    <property type="molecule type" value="Genomic_DNA"/>
</dbReference>
<dbReference type="RefSeq" id="WP_012078484.1">
    <property type="nucleotide sequence ID" value="NC_009659.1"/>
</dbReference>
<dbReference type="SMR" id="A6SVL3"/>
<dbReference type="STRING" id="375286.mma_0620"/>
<dbReference type="KEGG" id="mms:mma_0620"/>
<dbReference type="eggNOG" id="COG0254">
    <property type="taxonomic scope" value="Bacteria"/>
</dbReference>
<dbReference type="HOGENOM" id="CLU_114306_2_1_4"/>
<dbReference type="OrthoDB" id="9803251at2"/>
<dbReference type="Proteomes" id="UP000006388">
    <property type="component" value="Chromosome"/>
</dbReference>
<dbReference type="GO" id="GO:1990904">
    <property type="term" value="C:ribonucleoprotein complex"/>
    <property type="evidence" value="ECO:0007669"/>
    <property type="project" value="UniProtKB-KW"/>
</dbReference>
<dbReference type="GO" id="GO:0005840">
    <property type="term" value="C:ribosome"/>
    <property type="evidence" value="ECO:0007669"/>
    <property type="project" value="UniProtKB-KW"/>
</dbReference>
<dbReference type="GO" id="GO:0003735">
    <property type="term" value="F:structural constituent of ribosome"/>
    <property type="evidence" value="ECO:0007669"/>
    <property type="project" value="InterPro"/>
</dbReference>
<dbReference type="GO" id="GO:0006412">
    <property type="term" value="P:translation"/>
    <property type="evidence" value="ECO:0007669"/>
    <property type="project" value="UniProtKB-UniRule"/>
</dbReference>
<dbReference type="Gene3D" id="4.10.830.30">
    <property type="entry name" value="Ribosomal protein L31"/>
    <property type="match status" value="1"/>
</dbReference>
<dbReference type="HAMAP" id="MF_00502">
    <property type="entry name" value="Ribosomal_bL31_2"/>
    <property type="match status" value="1"/>
</dbReference>
<dbReference type="InterPro" id="IPR034704">
    <property type="entry name" value="Ribosomal_bL28/bL31-like_sf"/>
</dbReference>
<dbReference type="InterPro" id="IPR002150">
    <property type="entry name" value="Ribosomal_bL31"/>
</dbReference>
<dbReference type="InterPro" id="IPR027493">
    <property type="entry name" value="Ribosomal_bL31_B"/>
</dbReference>
<dbReference type="InterPro" id="IPR042105">
    <property type="entry name" value="Ribosomal_bL31_sf"/>
</dbReference>
<dbReference type="NCBIfam" id="TIGR00105">
    <property type="entry name" value="L31"/>
    <property type="match status" value="1"/>
</dbReference>
<dbReference type="NCBIfam" id="NF002462">
    <property type="entry name" value="PRK01678.1"/>
    <property type="match status" value="1"/>
</dbReference>
<dbReference type="PANTHER" id="PTHR33280">
    <property type="entry name" value="50S RIBOSOMAL PROTEIN L31, CHLOROPLASTIC"/>
    <property type="match status" value="1"/>
</dbReference>
<dbReference type="PANTHER" id="PTHR33280:SF1">
    <property type="entry name" value="LARGE RIBOSOMAL SUBUNIT PROTEIN BL31C"/>
    <property type="match status" value="1"/>
</dbReference>
<dbReference type="Pfam" id="PF01197">
    <property type="entry name" value="Ribosomal_L31"/>
    <property type="match status" value="1"/>
</dbReference>
<dbReference type="PRINTS" id="PR01249">
    <property type="entry name" value="RIBOSOMALL31"/>
</dbReference>
<dbReference type="SUPFAM" id="SSF143800">
    <property type="entry name" value="L28p-like"/>
    <property type="match status" value="1"/>
</dbReference>
<dbReference type="PROSITE" id="PS01143">
    <property type="entry name" value="RIBOSOMAL_L31"/>
    <property type="match status" value="1"/>
</dbReference>
<organism>
    <name type="scientific">Janthinobacterium sp. (strain Marseille)</name>
    <name type="common">Minibacterium massiliensis</name>
    <dbReference type="NCBI Taxonomy" id="375286"/>
    <lineage>
        <taxon>Bacteria</taxon>
        <taxon>Pseudomonadati</taxon>
        <taxon>Pseudomonadota</taxon>
        <taxon>Betaproteobacteria</taxon>
        <taxon>Burkholderiales</taxon>
        <taxon>Oxalobacteraceae</taxon>
        <taxon>Janthinobacterium</taxon>
    </lineage>
</organism>
<name>RL31B_JANMA</name>
<feature type="chain" id="PRO_1000014698" description="Large ribosomal subunit protein bL31B">
    <location>
        <begin position="1"/>
        <end position="88"/>
    </location>
</feature>
<gene>
    <name evidence="1" type="primary">rpmE2</name>
    <name type="ordered locus">mma_0620</name>
</gene>
<evidence type="ECO:0000255" key="1">
    <source>
        <dbReference type="HAMAP-Rule" id="MF_00502"/>
    </source>
</evidence>
<evidence type="ECO:0000305" key="2"/>
<protein>
    <recommendedName>
        <fullName evidence="1">Large ribosomal subunit protein bL31B</fullName>
    </recommendedName>
    <alternativeName>
        <fullName evidence="2">50S ribosomal protein L31 type B</fullName>
    </alternativeName>
</protein>
<keyword id="KW-0687">Ribonucleoprotein</keyword>
<keyword id="KW-0689">Ribosomal protein</keyword>
<accession>A6SVL3</accession>
<proteinExistence type="inferred from homology"/>
<reference key="1">
    <citation type="journal article" date="2007" name="PLoS Genet.">
        <title>Genome analysis of Minibacterium massiliensis highlights the convergent evolution of water-living bacteria.</title>
        <authorList>
            <person name="Audic S."/>
            <person name="Robert C."/>
            <person name="Campagna B."/>
            <person name="Parinello H."/>
            <person name="Claverie J.-M."/>
            <person name="Raoult D."/>
            <person name="Drancourt M."/>
        </authorList>
    </citation>
    <scope>NUCLEOTIDE SEQUENCE [LARGE SCALE GENOMIC DNA]</scope>
    <source>
        <strain>Marseille</strain>
    </source>
</reference>
<sequence>MKEGIHPDYRDVVFQDMSNDFKFITRSTIQTRETIEFEGASYPLVKIEVSSESHPFYTGKHKIVDTAGRVDKFRKKFGTVGSKTSVAE</sequence>